<name>MINE_ECOL5</name>
<evidence type="ECO:0000255" key="1">
    <source>
        <dbReference type="HAMAP-Rule" id="MF_00262"/>
    </source>
</evidence>
<keyword id="KW-0131">Cell cycle</keyword>
<keyword id="KW-0132">Cell division</keyword>
<dbReference type="EMBL" id="CP000247">
    <property type="protein sequence ID" value="ABG69227.1"/>
    <property type="molecule type" value="Genomic_DNA"/>
</dbReference>
<dbReference type="RefSeq" id="WP_001185665.1">
    <property type="nucleotide sequence ID" value="NC_008253.1"/>
</dbReference>
<dbReference type="SMR" id="Q0TIK2"/>
<dbReference type="GeneID" id="93776260"/>
<dbReference type="KEGG" id="ecp:ECP_1216"/>
<dbReference type="HOGENOM" id="CLU_137929_2_2_6"/>
<dbReference type="Proteomes" id="UP000009182">
    <property type="component" value="Chromosome"/>
</dbReference>
<dbReference type="GO" id="GO:0051301">
    <property type="term" value="P:cell division"/>
    <property type="evidence" value="ECO:0007669"/>
    <property type="project" value="UniProtKB-KW"/>
</dbReference>
<dbReference type="GO" id="GO:0032955">
    <property type="term" value="P:regulation of division septum assembly"/>
    <property type="evidence" value="ECO:0007669"/>
    <property type="project" value="InterPro"/>
</dbReference>
<dbReference type="FunFam" id="3.30.1070.10:FF:000001">
    <property type="entry name" value="Cell division topological specificity factor"/>
    <property type="match status" value="1"/>
</dbReference>
<dbReference type="Gene3D" id="3.30.1070.10">
    <property type="entry name" value="Cell division topological specificity factor MinE"/>
    <property type="match status" value="1"/>
</dbReference>
<dbReference type="HAMAP" id="MF_00262">
    <property type="entry name" value="MinE"/>
    <property type="match status" value="1"/>
</dbReference>
<dbReference type="InterPro" id="IPR005527">
    <property type="entry name" value="MinE"/>
</dbReference>
<dbReference type="InterPro" id="IPR036707">
    <property type="entry name" value="MinE_sf"/>
</dbReference>
<dbReference type="NCBIfam" id="TIGR01215">
    <property type="entry name" value="minE"/>
    <property type="match status" value="1"/>
</dbReference>
<dbReference type="NCBIfam" id="NF001422">
    <property type="entry name" value="PRK00296.1"/>
    <property type="match status" value="1"/>
</dbReference>
<dbReference type="Pfam" id="PF03776">
    <property type="entry name" value="MinE"/>
    <property type="match status" value="1"/>
</dbReference>
<dbReference type="SUPFAM" id="SSF55229">
    <property type="entry name" value="Cell division protein MinE topological specificity domain"/>
    <property type="match status" value="1"/>
</dbReference>
<organism>
    <name type="scientific">Escherichia coli O6:K15:H31 (strain 536 / UPEC)</name>
    <dbReference type="NCBI Taxonomy" id="362663"/>
    <lineage>
        <taxon>Bacteria</taxon>
        <taxon>Pseudomonadati</taxon>
        <taxon>Pseudomonadota</taxon>
        <taxon>Gammaproteobacteria</taxon>
        <taxon>Enterobacterales</taxon>
        <taxon>Enterobacteriaceae</taxon>
        <taxon>Escherichia</taxon>
    </lineage>
</organism>
<protein>
    <recommendedName>
        <fullName evidence="1">Cell division topological specificity factor</fullName>
    </recommendedName>
</protein>
<reference key="1">
    <citation type="journal article" date="2006" name="Mol. Microbiol.">
        <title>Role of pathogenicity island-associated integrases in the genome plasticity of uropathogenic Escherichia coli strain 536.</title>
        <authorList>
            <person name="Hochhut B."/>
            <person name="Wilde C."/>
            <person name="Balling G."/>
            <person name="Middendorf B."/>
            <person name="Dobrindt U."/>
            <person name="Brzuszkiewicz E."/>
            <person name="Gottschalk G."/>
            <person name="Carniel E."/>
            <person name="Hacker J."/>
        </authorList>
    </citation>
    <scope>NUCLEOTIDE SEQUENCE [LARGE SCALE GENOMIC DNA]</scope>
    <source>
        <strain>536 / UPEC</strain>
    </source>
</reference>
<feature type="chain" id="PRO_0000298113" description="Cell division topological specificity factor">
    <location>
        <begin position="1"/>
        <end position="88"/>
    </location>
</feature>
<gene>
    <name evidence="1" type="primary">minE</name>
    <name type="ordered locus">ECP_1216</name>
</gene>
<comment type="function">
    <text evidence="1">Prevents the cell division inhibition by proteins MinC and MinD at internal division sites while permitting inhibition at polar sites. This ensures cell division at the proper site by restricting the formation of a division septum at the midpoint of the long axis of the cell.</text>
</comment>
<comment type="similarity">
    <text evidence="1">Belongs to the MinE family.</text>
</comment>
<proteinExistence type="inferred from homology"/>
<sequence length="88" mass="10235">MALLDFFLSRKKNTANIAKERLQIIVAERRRSDAEPHYLPQLRKDILEVICKYVQIDPEMVTVQLEQKDGDISILELNVTLPEAEELK</sequence>
<accession>Q0TIK2</accession>